<reference key="1">
    <citation type="journal article" date="1993" name="J. Biol. Chem.">
        <title>A Kazal-type inhibitor with thrombin specificity from Rhodnius prolixus.</title>
        <authorList>
            <person name="Friedrich T."/>
            <person name="Kroeger B."/>
            <person name="Bialojan S."/>
            <person name="Lemaire H.G."/>
            <person name="Hoeffken H.W."/>
            <person name="Reuschenbach P."/>
            <person name="Otte M."/>
            <person name="Dodt J."/>
        </authorList>
    </citation>
    <scope>NUCLEOTIDE SEQUENCE [MRNA]</scope>
    <scope>PROTEIN SEQUENCE OF 1-25</scope>
    <scope>FUNCTION</scope>
    <scope>3D-STRUCTURE MODELING</scope>
</reference>
<reference key="2">
    <citation type="journal article" date="1995" name="EMBO J.">
        <title>Two heads are better than one: crystal structure of the insect derived double domain Kazal inhibitor rhodniin in complex with thrombin.</title>
        <authorList>
            <person name="van de Locht A."/>
            <person name="Lamba D."/>
            <person name="Bauer M."/>
            <person name="Huber R."/>
            <person name="Friedrich T."/>
            <person name="Kroeger B."/>
            <person name="Hoeffken H.W."/>
            <person name="Bode W."/>
        </authorList>
    </citation>
    <scope>X-RAY CRYSTALLOGRAPHY (2.6 ANGSTROMS)</scope>
    <scope>DISULFIDE BONDS</scope>
</reference>
<organism>
    <name type="scientific">Rhodnius prolixus</name>
    <name type="common">Triatomid bug</name>
    <dbReference type="NCBI Taxonomy" id="13249"/>
    <lineage>
        <taxon>Eukaryota</taxon>
        <taxon>Metazoa</taxon>
        <taxon>Ecdysozoa</taxon>
        <taxon>Arthropoda</taxon>
        <taxon>Hexapoda</taxon>
        <taxon>Insecta</taxon>
        <taxon>Pterygota</taxon>
        <taxon>Neoptera</taxon>
        <taxon>Paraneoptera</taxon>
        <taxon>Hemiptera</taxon>
        <taxon>Heteroptera</taxon>
        <taxon>Panheteroptera</taxon>
        <taxon>Cimicomorpha</taxon>
        <taxon>Reduviidae</taxon>
        <taxon>Triatominae</taxon>
        <taxon>Rhodnius</taxon>
    </lineage>
</organism>
<name>THBI_RHOPR</name>
<sequence length="103" mass="11079">EGGEPCACPHALHRVCGSDGETYSNPCTLNCAKFNGKPELVKVHDGPCEPDEDEDVCQECDGDEYKPVCGSDDITYDNNCRLECASISSSPGVELKHEGPCRT</sequence>
<accession>Q06684</accession>
<comment type="function">
    <text>Thrombin-specific inhibitor. Appears to form 1:1 complexes with thrombin. Prevents blood clotting to allow the insect to feed on blood.</text>
</comment>
<comment type="subcellular location">
    <subcellularLocation>
        <location>Secreted</location>
    </subcellularLocation>
</comment>
<keyword id="KW-0002">3D-structure</keyword>
<keyword id="KW-0903">Direct protein sequencing</keyword>
<keyword id="KW-1015">Disulfide bond</keyword>
<keyword id="KW-0646">Protease inhibitor</keyword>
<keyword id="KW-1185">Reference proteome</keyword>
<keyword id="KW-0677">Repeat</keyword>
<keyword id="KW-0964">Secreted</keyword>
<keyword id="KW-0722">Serine protease inhibitor</keyword>
<protein>
    <recommendedName>
        <fullName evidence="3">Thrombin inhibitor rhodniin</fullName>
    </recommendedName>
</protein>
<evidence type="ECO:0000255" key="1">
    <source>
        <dbReference type="PROSITE-ProRule" id="PRU00798"/>
    </source>
</evidence>
<evidence type="ECO:0000269" key="2">
    <source>
    </source>
</evidence>
<evidence type="ECO:0000303" key="3">
    <source>
    </source>
</evidence>
<evidence type="ECO:0000305" key="4">
    <source>
    </source>
</evidence>
<evidence type="ECO:0007744" key="5">
    <source>
        <dbReference type="PDB" id="1TBQ"/>
    </source>
</evidence>
<evidence type="ECO:0007744" key="6">
    <source>
        <dbReference type="PDB" id="1TBR"/>
    </source>
</evidence>
<evidence type="ECO:0007829" key="7">
    <source>
        <dbReference type="PDB" id="1TBR"/>
    </source>
</evidence>
<proteinExistence type="evidence at protein level"/>
<dbReference type="EMBL" id="Z22559">
    <property type="protein sequence ID" value="CAA80281.1"/>
    <property type="molecule type" value="mRNA"/>
</dbReference>
<dbReference type="PIR" id="A47337">
    <property type="entry name" value="A47337"/>
</dbReference>
<dbReference type="PDB" id="1TBQ">
    <property type="method" value="X-ray"/>
    <property type="resolution" value="3.10 A"/>
    <property type="chains" value="R/S=1-103"/>
</dbReference>
<dbReference type="PDB" id="1TBR">
    <property type="method" value="X-ray"/>
    <property type="resolution" value="2.60 A"/>
    <property type="chains" value="R/S=1-103"/>
</dbReference>
<dbReference type="PDBsum" id="1TBQ"/>
<dbReference type="PDBsum" id="1TBR"/>
<dbReference type="SMR" id="Q06684"/>
<dbReference type="STRING" id="13249.Q06684"/>
<dbReference type="MEROPS" id="I01.019"/>
<dbReference type="MEROPS" id="I01.031"/>
<dbReference type="InParanoid" id="Q06684"/>
<dbReference type="EvolutionaryTrace" id="Q06684"/>
<dbReference type="Proteomes" id="UP000015103">
    <property type="component" value="Unassembled WGS sequence"/>
</dbReference>
<dbReference type="GO" id="GO:0005576">
    <property type="term" value="C:extracellular region"/>
    <property type="evidence" value="ECO:0007669"/>
    <property type="project" value="UniProtKB-SubCell"/>
</dbReference>
<dbReference type="GO" id="GO:0004867">
    <property type="term" value="F:serine-type endopeptidase inhibitor activity"/>
    <property type="evidence" value="ECO:0007669"/>
    <property type="project" value="UniProtKB-KW"/>
</dbReference>
<dbReference type="CDD" id="cd00104">
    <property type="entry name" value="KAZAL_FS"/>
    <property type="match status" value="2"/>
</dbReference>
<dbReference type="FunFam" id="3.30.60.30:FF:000067">
    <property type="entry name" value="Thrombin inhibitor rhodniin"/>
    <property type="match status" value="2"/>
</dbReference>
<dbReference type="Gene3D" id="3.30.60.30">
    <property type="match status" value="2"/>
</dbReference>
<dbReference type="InterPro" id="IPR002350">
    <property type="entry name" value="Kazal_dom"/>
</dbReference>
<dbReference type="InterPro" id="IPR036058">
    <property type="entry name" value="Kazal_dom_sf"/>
</dbReference>
<dbReference type="InterPro" id="IPR039932">
    <property type="entry name" value="Spink4-like"/>
</dbReference>
<dbReference type="PANTHER" id="PTHR21179:SF0">
    <property type="entry name" value="SERINE PROTEASE INHIBITOR KAZAL-TYPE 4"/>
    <property type="match status" value="1"/>
</dbReference>
<dbReference type="PANTHER" id="PTHR21179">
    <property type="entry name" value="SERINE-TYPE ENDOPEPTIDASE INHIBITOR"/>
    <property type="match status" value="1"/>
</dbReference>
<dbReference type="Pfam" id="PF00050">
    <property type="entry name" value="Kazal_1"/>
    <property type="match status" value="1"/>
</dbReference>
<dbReference type="Pfam" id="PF07648">
    <property type="entry name" value="Kazal_2"/>
    <property type="match status" value="1"/>
</dbReference>
<dbReference type="SMART" id="SM00280">
    <property type="entry name" value="KAZAL"/>
    <property type="match status" value="2"/>
</dbReference>
<dbReference type="SUPFAM" id="SSF100895">
    <property type="entry name" value="Kazal-type serine protease inhibitors"/>
    <property type="match status" value="2"/>
</dbReference>
<dbReference type="PROSITE" id="PS00282">
    <property type="entry name" value="KAZAL_1"/>
    <property type="match status" value="1"/>
</dbReference>
<dbReference type="PROSITE" id="PS51465">
    <property type="entry name" value="KAZAL_2"/>
    <property type="match status" value="2"/>
</dbReference>
<feature type="chain" id="PRO_0000073198" description="Thrombin inhibitor rhodniin" evidence="4">
    <location>
        <begin position="1"/>
        <end position="103"/>
    </location>
</feature>
<feature type="domain" description="Kazal-like 1" evidence="1">
    <location>
        <begin position="1"/>
        <end position="50"/>
    </location>
</feature>
<feature type="domain" description="Kazal-like 2" evidence="1">
    <location>
        <begin position="51"/>
        <end position="103"/>
    </location>
</feature>
<feature type="site" description="Reactive bond">
    <location>
        <begin position="10"/>
        <end position="11"/>
    </location>
</feature>
<feature type="disulfide bond" evidence="2 5 6">
    <location>
        <begin position="6"/>
        <end position="31"/>
    </location>
</feature>
<feature type="disulfide bond" evidence="2 5 6">
    <location>
        <begin position="8"/>
        <end position="27"/>
    </location>
</feature>
<feature type="disulfide bond" evidence="2 5 6">
    <location>
        <begin position="16"/>
        <end position="48"/>
    </location>
</feature>
<feature type="disulfide bond" evidence="2 5 6">
    <location>
        <begin position="57"/>
        <end position="84"/>
    </location>
</feature>
<feature type="disulfide bond" evidence="2 5 6">
    <location>
        <begin position="60"/>
        <end position="80"/>
    </location>
</feature>
<feature type="disulfide bond" evidence="2 5 6">
    <location>
        <begin position="69"/>
        <end position="101"/>
    </location>
</feature>
<feature type="helix" evidence="7">
    <location>
        <begin position="4"/>
        <end position="6"/>
    </location>
</feature>
<feature type="strand" evidence="7">
    <location>
        <begin position="7"/>
        <end position="10"/>
    </location>
</feature>
<feature type="strand" evidence="7">
    <location>
        <begin position="15"/>
        <end position="17"/>
    </location>
</feature>
<feature type="strand" evidence="7">
    <location>
        <begin position="22"/>
        <end position="25"/>
    </location>
</feature>
<feature type="helix" evidence="7">
    <location>
        <begin position="26"/>
        <end position="33"/>
    </location>
</feature>
<feature type="turn" evidence="7">
    <location>
        <begin position="34"/>
        <end position="36"/>
    </location>
</feature>
<feature type="strand" evidence="7">
    <location>
        <begin position="42"/>
        <end position="46"/>
    </location>
</feature>
<feature type="helix" evidence="7">
    <location>
        <begin position="58"/>
        <end position="60"/>
    </location>
</feature>
<feature type="strand" evidence="7">
    <location>
        <begin position="68"/>
        <end position="70"/>
    </location>
</feature>
<feature type="turn" evidence="7">
    <location>
        <begin position="71"/>
        <end position="73"/>
    </location>
</feature>
<feature type="strand" evidence="7">
    <location>
        <begin position="74"/>
        <end position="78"/>
    </location>
</feature>
<feature type="helix" evidence="7">
    <location>
        <begin position="79"/>
        <end position="85"/>
    </location>
</feature>
<feature type="turn" evidence="7">
    <location>
        <begin position="86"/>
        <end position="89"/>
    </location>
</feature>
<feature type="strand" evidence="7">
    <location>
        <begin position="95"/>
        <end position="100"/>
    </location>
</feature>